<keyword id="KW-0407">Ion channel</keyword>
<keyword id="KW-0406">Ion transport</keyword>
<keyword id="KW-1071">Ligand-gated ion channel</keyword>
<keyword id="KW-0472">Membrane</keyword>
<keyword id="KW-0539">Nucleus</keyword>
<keyword id="KW-1185">Reference proteome</keyword>
<keyword id="KW-0812">Transmembrane</keyword>
<keyword id="KW-1133">Transmembrane helix</keyword>
<keyword id="KW-0813">Transport</keyword>
<reference key="1">
    <citation type="journal article" date="2011" name="Nature">
        <title>The Medicago genome provides insight into the evolution of rhizobial symbioses.</title>
        <authorList>
            <person name="Young N.D."/>
            <person name="Debelle F."/>
            <person name="Oldroyd G.E.D."/>
            <person name="Geurts R."/>
            <person name="Cannon S.B."/>
            <person name="Udvardi M.K."/>
            <person name="Benedito V.A."/>
            <person name="Mayer K.F.X."/>
            <person name="Gouzy J."/>
            <person name="Schoof H."/>
            <person name="Van de Peer Y."/>
            <person name="Proost S."/>
            <person name="Cook D.R."/>
            <person name="Meyers B.C."/>
            <person name="Spannagl M."/>
            <person name="Cheung F."/>
            <person name="De Mita S."/>
            <person name="Krishnakumar V."/>
            <person name="Gundlach H."/>
            <person name="Zhou S."/>
            <person name="Mudge J."/>
            <person name="Bharti A.K."/>
            <person name="Murray J.D."/>
            <person name="Naoumkina M.A."/>
            <person name="Rosen B."/>
            <person name="Silverstein K.A.T."/>
            <person name="Tang H."/>
            <person name="Rombauts S."/>
            <person name="Zhao P.X."/>
            <person name="Zhou P."/>
            <person name="Barbe V."/>
            <person name="Bardou P."/>
            <person name="Bechner M."/>
            <person name="Bellec A."/>
            <person name="Berger A."/>
            <person name="Berges H."/>
            <person name="Bidwell S."/>
            <person name="Bisseling T."/>
            <person name="Choisne N."/>
            <person name="Couloux A."/>
            <person name="Denny R."/>
            <person name="Deshpande S."/>
            <person name="Dai X."/>
            <person name="Doyle J.J."/>
            <person name="Dudez A.-M."/>
            <person name="Farmer A.D."/>
            <person name="Fouteau S."/>
            <person name="Franken C."/>
            <person name="Gibelin C."/>
            <person name="Gish J."/>
            <person name="Goldstein S."/>
            <person name="Gonzalez A.J."/>
            <person name="Green P.J."/>
            <person name="Hallab A."/>
            <person name="Hartog M."/>
            <person name="Hua A."/>
            <person name="Humphray S.J."/>
            <person name="Jeong D.-H."/>
            <person name="Jing Y."/>
            <person name="Jocker A."/>
            <person name="Kenton S.M."/>
            <person name="Kim D.-J."/>
            <person name="Klee K."/>
            <person name="Lai H."/>
            <person name="Lang C."/>
            <person name="Lin S."/>
            <person name="Macmil S.L."/>
            <person name="Magdelenat G."/>
            <person name="Matthews L."/>
            <person name="McCorrison J."/>
            <person name="Monaghan E.L."/>
            <person name="Mun J.-H."/>
            <person name="Najar F.Z."/>
            <person name="Nicholson C."/>
            <person name="Noirot C."/>
            <person name="O'Bleness M."/>
            <person name="Paule C.R."/>
            <person name="Poulain J."/>
            <person name="Prion F."/>
            <person name="Qin B."/>
            <person name="Qu C."/>
            <person name="Retzel E.F."/>
            <person name="Riddle C."/>
            <person name="Sallet E."/>
            <person name="Samain S."/>
            <person name="Samson N."/>
            <person name="Sanders I."/>
            <person name="Saurat O."/>
            <person name="Scarpelli C."/>
            <person name="Schiex T."/>
            <person name="Segurens B."/>
            <person name="Severin A.J."/>
            <person name="Sherrier D.J."/>
            <person name="Shi R."/>
            <person name="Sims S."/>
            <person name="Singer S.R."/>
            <person name="Sinharoy S."/>
            <person name="Sterck L."/>
            <person name="Viollet A."/>
            <person name="Wang B.-B."/>
            <person name="Wang K."/>
            <person name="Wang M."/>
            <person name="Wang X."/>
            <person name="Warfsmann J."/>
            <person name="Weissenbach J."/>
            <person name="White D.D."/>
            <person name="White J.D."/>
            <person name="Wiley G.B."/>
            <person name="Wincker P."/>
            <person name="Xing Y."/>
            <person name="Yang L."/>
            <person name="Yao Z."/>
            <person name="Ying F."/>
            <person name="Zhai J."/>
            <person name="Zhou L."/>
            <person name="Zuber A."/>
            <person name="Denarie J."/>
            <person name="Dixon R.A."/>
            <person name="May G.D."/>
            <person name="Schwartz D.C."/>
            <person name="Rogers J."/>
            <person name="Quetier F."/>
            <person name="Town C.D."/>
            <person name="Roe B.A."/>
        </authorList>
    </citation>
    <scope>NUCLEOTIDE SEQUENCE [LARGE SCALE GENOMIC DNA]</scope>
    <source>
        <strain>cv. Jemalong A17</strain>
    </source>
</reference>
<reference key="2">
    <citation type="journal article" date="2014" name="BMC Genomics">
        <title>An improved genome release (version Mt4.0) for the model legume Medicago truncatula.</title>
        <authorList>
            <person name="Tang H."/>
            <person name="Krishnakumar V."/>
            <person name="Bidwell S."/>
            <person name="Rosen B."/>
            <person name="Chan A."/>
            <person name="Zhou S."/>
            <person name="Gentzbittel L."/>
            <person name="Childs K.L."/>
            <person name="Yandell M."/>
            <person name="Gundlach H."/>
            <person name="Mayer K.F."/>
            <person name="Schwartz D.C."/>
            <person name="Town C.D."/>
        </authorList>
    </citation>
    <scope>GENOME REANNOTATION</scope>
    <source>
        <strain>cv. Jemalong A17</strain>
    </source>
</reference>
<reference key="3">
    <citation type="journal article" date="2016" name="Science">
        <title>Nuclear-localized cyclic nucleotide-gated channels mediate symbiotic calcium oscillations.</title>
        <authorList>
            <person name="Charpentier M."/>
            <person name="Sun J."/>
            <person name="Martins T.V."/>
            <person name="Radhakrishnan G.V."/>
            <person name="Findlay K."/>
            <person name="Soumpourou E."/>
            <person name="Thouin J."/>
            <person name="Very A.A."/>
            <person name="Sanders D."/>
            <person name="Morris R.J."/>
            <person name="Oldroyd G.E."/>
        </authorList>
    </citation>
    <scope>FUNCTION</scope>
    <scope>TISSUE SPECIFICITY</scope>
    <scope>SUBCELLULAR LOCATION</scope>
    <scope>INTERACTION WITH DMI1</scope>
    <scope>GENE FAMILY</scope>
    <scope>NOMENCLATURE</scope>
</reference>
<comment type="function">
    <text evidence="3">Cyclic nucleotide-gated channel involved in the establishment of both rhizobial and mycorrhizal associations (PubMed:27230377). Required for full activation of nuclear-localized Ca(2+) oscillations by Nod and Myc factors (PubMed:27230377). Simultaneous activation of the K(+)-permeable channel DMI1 and the Ca(2+) channel CNGC15 can give rise to sustained Ca(2+) oscillations (PubMed:27230377). May function during fertilization in both female and male gametophytic Ca(2+) signaling (PubMed:27230377).</text>
</comment>
<comment type="subunit">
    <text evidence="3">Interacts (via N-terminus) with DMI1 (via c-terminus). The Nod factor has no effect on this interaction, implying that the complex is maintained after activation.</text>
</comment>
<comment type="subcellular location">
    <subcellularLocation>
        <location evidence="3">Nucleus membrane</location>
        <topology evidence="1">Multi-pass membrane protein</topology>
    </subcellularLocation>
</comment>
<comment type="tissue specificity">
    <text evidence="3">Expressed in roots, stems, leaves, flowers and pods.</text>
</comment>
<comment type="similarity">
    <text evidence="5">Belongs to the cyclic nucleotide-gated cation channel (TC 1.A.1.5) family.</text>
</comment>
<dbReference type="EMBL" id="CM001220">
    <property type="protein sequence ID" value="AES88563.2"/>
    <property type="molecule type" value="Genomic_DNA"/>
</dbReference>
<dbReference type="RefSeq" id="XP_003606366.2">
    <property type="nucleotide sequence ID" value="XM_003606318.2"/>
</dbReference>
<dbReference type="STRING" id="3880.G7JND3"/>
<dbReference type="PaxDb" id="3880-AES88563"/>
<dbReference type="eggNOG" id="KOG0498">
    <property type="taxonomic scope" value="Eukaryota"/>
</dbReference>
<dbReference type="HOGENOM" id="CLU_013069_3_0_1"/>
<dbReference type="Proteomes" id="UP000002051">
    <property type="component" value="Chromosome 4"/>
</dbReference>
<dbReference type="GO" id="GO:0031965">
    <property type="term" value="C:nuclear membrane"/>
    <property type="evidence" value="ECO:0000314"/>
    <property type="project" value="UniProtKB"/>
</dbReference>
<dbReference type="GO" id="GO:0005262">
    <property type="term" value="F:calcium channel activity"/>
    <property type="evidence" value="ECO:0000314"/>
    <property type="project" value="UniProtKB"/>
</dbReference>
<dbReference type="GO" id="GO:0044325">
    <property type="term" value="F:transmembrane transporter binding"/>
    <property type="evidence" value="ECO:0000353"/>
    <property type="project" value="UniProtKB"/>
</dbReference>
<dbReference type="GO" id="GO:0005249">
    <property type="term" value="F:voltage-gated potassium channel activity"/>
    <property type="evidence" value="ECO:0007669"/>
    <property type="project" value="InterPro"/>
</dbReference>
<dbReference type="GO" id="GO:0036377">
    <property type="term" value="P:arbuscular mycorrhizal association"/>
    <property type="evidence" value="ECO:0000315"/>
    <property type="project" value="UniProtKB"/>
</dbReference>
<dbReference type="GO" id="GO:0009877">
    <property type="term" value="P:nodulation"/>
    <property type="evidence" value="ECO:0000315"/>
    <property type="project" value="UniProtKB"/>
</dbReference>
<dbReference type="CDD" id="cd00038">
    <property type="entry name" value="CAP_ED"/>
    <property type="match status" value="1"/>
</dbReference>
<dbReference type="FunFam" id="1.10.287.630:FF:000003">
    <property type="entry name" value="Cyclic nucleotide-gated ion channel 1"/>
    <property type="match status" value="1"/>
</dbReference>
<dbReference type="FunFam" id="2.60.120.10:FF:000024">
    <property type="entry name" value="Cyclic nucleotide-gated ion channel 1"/>
    <property type="match status" value="1"/>
</dbReference>
<dbReference type="Gene3D" id="1.10.287.70">
    <property type="match status" value="1"/>
</dbReference>
<dbReference type="Gene3D" id="1.10.287.630">
    <property type="entry name" value="Helix hairpin bin"/>
    <property type="match status" value="1"/>
</dbReference>
<dbReference type="Gene3D" id="2.60.120.10">
    <property type="entry name" value="Jelly Rolls"/>
    <property type="match status" value="1"/>
</dbReference>
<dbReference type="InterPro" id="IPR000595">
    <property type="entry name" value="cNMP-bd_dom"/>
</dbReference>
<dbReference type="InterPro" id="IPR018490">
    <property type="entry name" value="cNMP-bd_dom_sf"/>
</dbReference>
<dbReference type="InterPro" id="IPR005821">
    <property type="entry name" value="Ion_trans_dom"/>
</dbReference>
<dbReference type="InterPro" id="IPR003938">
    <property type="entry name" value="K_chnl_volt-dep_EAG/ELK/ERG"/>
</dbReference>
<dbReference type="InterPro" id="IPR014710">
    <property type="entry name" value="RmlC-like_jellyroll"/>
</dbReference>
<dbReference type="PANTHER" id="PTHR45651:SF12">
    <property type="entry name" value="CYCLIC NUCLEOTIDE-GATED ION CHANNEL 15-RELATED"/>
    <property type="match status" value="1"/>
</dbReference>
<dbReference type="PANTHER" id="PTHR45651">
    <property type="entry name" value="CYCLIC NUCLEOTIDE-GATED ION CHANNEL 15-RELATED-RELATED"/>
    <property type="match status" value="1"/>
</dbReference>
<dbReference type="Pfam" id="PF00027">
    <property type="entry name" value="cNMP_binding"/>
    <property type="match status" value="1"/>
</dbReference>
<dbReference type="Pfam" id="PF00520">
    <property type="entry name" value="Ion_trans"/>
    <property type="match status" value="1"/>
</dbReference>
<dbReference type="PRINTS" id="PR01463">
    <property type="entry name" value="EAGCHANLFMLY"/>
</dbReference>
<dbReference type="SMART" id="SM00100">
    <property type="entry name" value="cNMP"/>
    <property type="match status" value="1"/>
</dbReference>
<dbReference type="SUPFAM" id="SSF51206">
    <property type="entry name" value="cAMP-binding domain-like"/>
    <property type="match status" value="1"/>
</dbReference>
<dbReference type="SUPFAM" id="SSF81324">
    <property type="entry name" value="Voltage-gated potassium channels"/>
    <property type="match status" value="1"/>
</dbReference>
<dbReference type="PROSITE" id="PS50042">
    <property type="entry name" value="CNMP_BINDING_3"/>
    <property type="match status" value="1"/>
</dbReference>
<gene>
    <name evidence="4" type="primary">CNGC15B</name>
    <name type="ordered locus">MTR_4g058730</name>
</gene>
<evidence type="ECO:0000255" key="1"/>
<evidence type="ECO:0000255" key="2">
    <source>
        <dbReference type="PROSITE-ProRule" id="PRU00060"/>
    </source>
</evidence>
<evidence type="ECO:0000269" key="3">
    <source>
    </source>
</evidence>
<evidence type="ECO:0000303" key="4">
    <source>
    </source>
</evidence>
<evidence type="ECO:0000305" key="5"/>
<evidence type="ECO:0000312" key="6">
    <source>
        <dbReference type="Proteomes" id="UP000002051"/>
    </source>
</evidence>
<organism evidence="6">
    <name type="scientific">Medicago truncatula</name>
    <name type="common">Barrel medic</name>
    <name type="synonym">Medicago tribuloides</name>
    <dbReference type="NCBI Taxonomy" id="3880"/>
    <lineage>
        <taxon>Eukaryota</taxon>
        <taxon>Viridiplantae</taxon>
        <taxon>Streptophyta</taxon>
        <taxon>Embryophyta</taxon>
        <taxon>Tracheophyta</taxon>
        <taxon>Spermatophyta</taxon>
        <taxon>Magnoliopsida</taxon>
        <taxon>eudicotyledons</taxon>
        <taxon>Gunneridae</taxon>
        <taxon>Pentapetalae</taxon>
        <taxon>rosids</taxon>
        <taxon>fabids</taxon>
        <taxon>Fabales</taxon>
        <taxon>Fabaceae</taxon>
        <taxon>Papilionoideae</taxon>
        <taxon>50 kb inversion clade</taxon>
        <taxon>NPAAA clade</taxon>
        <taxon>Hologalegina</taxon>
        <taxon>IRL clade</taxon>
        <taxon>Trifolieae</taxon>
        <taxon>Medicago</taxon>
    </lineage>
</organism>
<protein>
    <recommendedName>
        <fullName evidence="4">Protein CNGC15b</fullName>
    </recommendedName>
    <alternativeName>
        <fullName evidence="4">Cyclic nucleotide-gated ion channel protein 15 b</fullName>
    </alternativeName>
</protein>
<accession>G7JND3</accession>
<accession>A0A0C3WX45</accession>
<feature type="chain" id="PRO_0000437093" description="Protein CNGC15b">
    <location>
        <begin position="1"/>
        <end position="620"/>
    </location>
</feature>
<feature type="transmembrane region" description="Helical" evidence="1">
    <location>
        <begin position="73"/>
        <end position="93"/>
    </location>
</feature>
<feature type="transmembrane region" description="Helical" evidence="1">
    <location>
        <begin position="102"/>
        <end position="122"/>
    </location>
</feature>
<feature type="transmembrane region" description="Helical" evidence="1">
    <location>
        <begin position="161"/>
        <end position="181"/>
    </location>
</feature>
<feature type="transmembrane region" description="Helical" evidence="1">
    <location>
        <begin position="198"/>
        <end position="218"/>
    </location>
</feature>
<feature type="transmembrane region" description="Helical" evidence="1">
    <location>
        <begin position="237"/>
        <end position="257"/>
    </location>
</feature>
<feature type="transmembrane region" description="Helical" evidence="1">
    <location>
        <begin position="356"/>
        <end position="376"/>
    </location>
</feature>
<feature type="binding site" evidence="2">
    <location>
        <begin position="462"/>
        <end position="559"/>
    </location>
    <ligand>
        <name>a nucleoside 3',5'-cyclic phosphate</name>
        <dbReference type="ChEBI" id="CHEBI:58464"/>
    </ligand>
</feature>
<name>CN15B_MEDTR</name>
<sequence>MVTPKFMSDLFEGDHLELAKLTSPNGDNGIKFNEKHVAPRVLSRVFSEDYKRVKRRRRIFDPRGQTIHQWNKIFLVACLISLFVDPLFFYLPIVQDEVCIDIGIAVEVFLIIIRSIADVFYVIHIFMRFHTAYVAPSSRVFGRGELVIDSSKIASRYLHKGFFLDFIAALPLPQVLIWIVIPNLGGSTIANTKNVLRFIIIIQYLPRLFLIFPLSSQIVKATGVVTETAWAGAAYNLMLYMLASHVLGACWYLLSIERQEACWKSVCKLEESSCQFDFFDCNMVKDSLRVSWFVTSNVTNLCSPNSLFYQFGIYGDAVTSKVTTSAFFNKYFFCLWWGLRNLSSLGQGLLTSTFVGEIMFAIVIATLGLVLFALLIGNMQTYLQSTTVRLEEWRVKRTDTEQWMHHRQLPQELRQSVRKYDQYKWIATRGVDEESLLRGLPLDLRRDIKRHLCLELVRRVPLFDAMDERMLDAICERLKPALCTENTYLVREGDPVNEMLFIIRGNLDSYTTDGGRTGFFNSCRIGPGDFCGEELLTWALDPRPTMVIPSSTRTVKAISEVEAFALIAEDLKFVASQFRRLHSKQLRNKLRFHSHQWRTWAACFIQVAWRRTIQEKKGSC</sequence>
<proteinExistence type="evidence at protein level"/>